<feature type="signal peptide" evidence="1">
    <location>
        <begin position="1"/>
        <end position="28"/>
    </location>
</feature>
<feature type="chain" id="PRO_0000013710" description="Uncharacterized protein YkpC">
    <location>
        <begin position="29"/>
        <end position="44"/>
    </location>
</feature>
<protein>
    <recommendedName>
        <fullName>Uncharacterized protein YkpC</fullName>
    </recommendedName>
</protein>
<proteinExistence type="inferred from homology"/>
<sequence length="44" mass="4507">MLRDLGRRVAIAAILSGIILGGMSISLANMPHSPAGGTVKLNHP</sequence>
<organism>
    <name type="scientific">Bacillus subtilis (strain 168)</name>
    <dbReference type="NCBI Taxonomy" id="224308"/>
    <lineage>
        <taxon>Bacteria</taxon>
        <taxon>Bacillati</taxon>
        <taxon>Bacillota</taxon>
        <taxon>Bacilli</taxon>
        <taxon>Bacillales</taxon>
        <taxon>Bacillaceae</taxon>
        <taxon>Bacillus</taxon>
    </lineage>
</organism>
<reference key="1">
    <citation type="journal article" date="1996" name="Microbiology">
        <title>The ampS-nprE (124 degrees-127 degrees) region of the Bacillus subtilis 168 chromosome: sequencing of a 27 kb segment and identification of several genes in the area.</title>
        <authorList>
            <person name="Winters P."/>
            <person name="Caldwell R.M."/>
            <person name="Enfield L."/>
            <person name="Ferrari E."/>
        </authorList>
    </citation>
    <scope>NUCLEOTIDE SEQUENCE [GENOMIC DNA]</scope>
    <source>
        <strain>168</strain>
    </source>
</reference>
<reference key="2">
    <citation type="journal article" date="1997" name="Nature">
        <title>The complete genome sequence of the Gram-positive bacterium Bacillus subtilis.</title>
        <authorList>
            <person name="Kunst F."/>
            <person name="Ogasawara N."/>
            <person name="Moszer I."/>
            <person name="Albertini A.M."/>
            <person name="Alloni G."/>
            <person name="Azevedo V."/>
            <person name="Bertero M.G."/>
            <person name="Bessieres P."/>
            <person name="Bolotin A."/>
            <person name="Borchert S."/>
            <person name="Borriss R."/>
            <person name="Boursier L."/>
            <person name="Brans A."/>
            <person name="Braun M."/>
            <person name="Brignell S.C."/>
            <person name="Bron S."/>
            <person name="Brouillet S."/>
            <person name="Bruschi C.V."/>
            <person name="Caldwell B."/>
            <person name="Capuano V."/>
            <person name="Carter N.M."/>
            <person name="Choi S.-K."/>
            <person name="Codani J.-J."/>
            <person name="Connerton I.F."/>
            <person name="Cummings N.J."/>
            <person name="Daniel R.A."/>
            <person name="Denizot F."/>
            <person name="Devine K.M."/>
            <person name="Duesterhoeft A."/>
            <person name="Ehrlich S.D."/>
            <person name="Emmerson P.T."/>
            <person name="Entian K.-D."/>
            <person name="Errington J."/>
            <person name="Fabret C."/>
            <person name="Ferrari E."/>
            <person name="Foulger D."/>
            <person name="Fritz C."/>
            <person name="Fujita M."/>
            <person name="Fujita Y."/>
            <person name="Fuma S."/>
            <person name="Galizzi A."/>
            <person name="Galleron N."/>
            <person name="Ghim S.-Y."/>
            <person name="Glaser P."/>
            <person name="Goffeau A."/>
            <person name="Golightly E.J."/>
            <person name="Grandi G."/>
            <person name="Guiseppi G."/>
            <person name="Guy B.J."/>
            <person name="Haga K."/>
            <person name="Haiech J."/>
            <person name="Harwood C.R."/>
            <person name="Henaut A."/>
            <person name="Hilbert H."/>
            <person name="Holsappel S."/>
            <person name="Hosono S."/>
            <person name="Hullo M.-F."/>
            <person name="Itaya M."/>
            <person name="Jones L.-M."/>
            <person name="Joris B."/>
            <person name="Karamata D."/>
            <person name="Kasahara Y."/>
            <person name="Klaerr-Blanchard M."/>
            <person name="Klein C."/>
            <person name="Kobayashi Y."/>
            <person name="Koetter P."/>
            <person name="Koningstein G."/>
            <person name="Krogh S."/>
            <person name="Kumano M."/>
            <person name="Kurita K."/>
            <person name="Lapidus A."/>
            <person name="Lardinois S."/>
            <person name="Lauber J."/>
            <person name="Lazarevic V."/>
            <person name="Lee S.-M."/>
            <person name="Levine A."/>
            <person name="Liu H."/>
            <person name="Masuda S."/>
            <person name="Mauel C."/>
            <person name="Medigue C."/>
            <person name="Medina N."/>
            <person name="Mellado R.P."/>
            <person name="Mizuno M."/>
            <person name="Moestl D."/>
            <person name="Nakai S."/>
            <person name="Noback M."/>
            <person name="Noone D."/>
            <person name="O'Reilly M."/>
            <person name="Ogawa K."/>
            <person name="Ogiwara A."/>
            <person name="Oudega B."/>
            <person name="Park S.-H."/>
            <person name="Parro V."/>
            <person name="Pohl T.M."/>
            <person name="Portetelle D."/>
            <person name="Porwollik S."/>
            <person name="Prescott A.M."/>
            <person name="Presecan E."/>
            <person name="Pujic P."/>
            <person name="Purnelle B."/>
            <person name="Rapoport G."/>
            <person name="Rey M."/>
            <person name="Reynolds S."/>
            <person name="Rieger M."/>
            <person name="Rivolta C."/>
            <person name="Rocha E."/>
            <person name="Roche B."/>
            <person name="Rose M."/>
            <person name="Sadaie Y."/>
            <person name="Sato T."/>
            <person name="Scanlan E."/>
            <person name="Schleich S."/>
            <person name="Schroeter R."/>
            <person name="Scoffone F."/>
            <person name="Sekiguchi J."/>
            <person name="Sekowska A."/>
            <person name="Seror S.J."/>
            <person name="Serror P."/>
            <person name="Shin B.-S."/>
            <person name="Soldo B."/>
            <person name="Sorokin A."/>
            <person name="Tacconi E."/>
            <person name="Takagi T."/>
            <person name="Takahashi H."/>
            <person name="Takemaru K."/>
            <person name="Takeuchi M."/>
            <person name="Tamakoshi A."/>
            <person name="Tanaka T."/>
            <person name="Terpstra P."/>
            <person name="Tognoni A."/>
            <person name="Tosato V."/>
            <person name="Uchiyama S."/>
            <person name="Vandenbol M."/>
            <person name="Vannier F."/>
            <person name="Vassarotti A."/>
            <person name="Viari A."/>
            <person name="Wambutt R."/>
            <person name="Wedler E."/>
            <person name="Wedler H."/>
            <person name="Weitzenegger T."/>
            <person name="Winters P."/>
            <person name="Wipat A."/>
            <person name="Yamamoto H."/>
            <person name="Yamane K."/>
            <person name="Yasumoto K."/>
            <person name="Yata K."/>
            <person name="Yoshida K."/>
            <person name="Yoshikawa H.-F."/>
            <person name="Zumstein E."/>
            <person name="Yoshikawa H."/>
            <person name="Danchin A."/>
        </authorList>
    </citation>
    <scope>NUCLEOTIDE SEQUENCE [LARGE SCALE GENOMIC DNA]</scope>
    <source>
        <strain>168</strain>
    </source>
</reference>
<keyword id="KW-1185">Reference proteome</keyword>
<keyword id="KW-0732">Signal</keyword>
<accession>Q45492</accession>
<dbReference type="EMBL" id="AF012285">
    <property type="protein sequence ID" value="AAC24921.1"/>
    <property type="molecule type" value="Genomic_DNA"/>
</dbReference>
<dbReference type="EMBL" id="AL009126">
    <property type="protein sequence ID" value="CAB13319.1"/>
    <property type="molecule type" value="Genomic_DNA"/>
</dbReference>
<dbReference type="PIR" id="G69861">
    <property type="entry name" value="G69861"/>
</dbReference>
<dbReference type="RefSeq" id="NP_389329.1">
    <property type="nucleotide sequence ID" value="NC_000964.3"/>
</dbReference>
<dbReference type="RefSeq" id="WP_003238865.1">
    <property type="nucleotide sequence ID" value="NZ_OZ025638.1"/>
</dbReference>
<dbReference type="STRING" id="224308.BSU14460"/>
<dbReference type="PaxDb" id="224308-BSU14460"/>
<dbReference type="EnsemblBacteria" id="CAB13319">
    <property type="protein sequence ID" value="CAB13319"/>
    <property type="gene ID" value="BSU_14460"/>
</dbReference>
<dbReference type="GeneID" id="938750"/>
<dbReference type="KEGG" id="bsu:BSU14460"/>
<dbReference type="PATRIC" id="fig|224308.179.peg.1576"/>
<dbReference type="InParanoid" id="Q45492"/>
<dbReference type="BioCyc" id="BSUB:BSU14460-MONOMER"/>
<dbReference type="PRO" id="PR:Q45492"/>
<dbReference type="Proteomes" id="UP000001570">
    <property type="component" value="Chromosome"/>
</dbReference>
<dbReference type="InterPro" id="IPR035379">
    <property type="entry name" value="YkpC-like"/>
</dbReference>
<dbReference type="Pfam" id="PF17447">
    <property type="entry name" value="YkpC"/>
    <property type="match status" value="1"/>
</dbReference>
<name>YKPC_BACSU</name>
<gene>
    <name type="primary">ykpC</name>
    <name type="ordered locus">BSU14460</name>
</gene>
<evidence type="ECO:0000255" key="1"/>